<reference key="1">
    <citation type="journal article" date="2003" name="Nucleic Acids Res.">
        <title>The complete genome sequence and analysis of Corynebacterium diphtheriae NCTC13129.</title>
        <authorList>
            <person name="Cerdeno-Tarraga A.-M."/>
            <person name="Efstratiou A."/>
            <person name="Dover L.G."/>
            <person name="Holden M.T.G."/>
            <person name="Pallen M.J."/>
            <person name="Bentley S.D."/>
            <person name="Besra G.S."/>
            <person name="Churcher C.M."/>
            <person name="James K.D."/>
            <person name="De Zoysa A."/>
            <person name="Chillingworth T."/>
            <person name="Cronin A."/>
            <person name="Dowd L."/>
            <person name="Feltwell T."/>
            <person name="Hamlin N."/>
            <person name="Holroyd S."/>
            <person name="Jagels K."/>
            <person name="Moule S."/>
            <person name="Quail M.A."/>
            <person name="Rabbinowitsch E."/>
            <person name="Rutherford K.M."/>
            <person name="Thomson N.R."/>
            <person name="Unwin L."/>
            <person name="Whitehead S."/>
            <person name="Barrell B.G."/>
            <person name="Parkhill J."/>
        </authorList>
    </citation>
    <scope>NUCLEOTIDE SEQUENCE [LARGE SCALE GENOMIC DNA]</scope>
    <source>
        <strain>ATCC 700971 / NCTC 13129 / Biotype gravis</strain>
    </source>
</reference>
<proteinExistence type="inferred from homology"/>
<gene>
    <name evidence="1" type="primary">dxs</name>
    <name type="ordered locus">DIP1397</name>
</gene>
<dbReference type="EC" id="2.2.1.7" evidence="1"/>
<dbReference type="EMBL" id="BX248358">
    <property type="protein sequence ID" value="CAE49928.1"/>
    <property type="molecule type" value="Genomic_DNA"/>
</dbReference>
<dbReference type="RefSeq" id="WP_010935041.1">
    <property type="nucleotide sequence ID" value="NC_002935.2"/>
</dbReference>
<dbReference type="SMR" id="Q6NGV3"/>
<dbReference type="STRING" id="257309.DIP1397"/>
<dbReference type="KEGG" id="cdi:DIP1397"/>
<dbReference type="HOGENOM" id="CLU_009227_1_4_11"/>
<dbReference type="UniPathway" id="UPA00064">
    <property type="reaction ID" value="UER00091"/>
</dbReference>
<dbReference type="Proteomes" id="UP000002198">
    <property type="component" value="Chromosome"/>
</dbReference>
<dbReference type="GO" id="GO:0005829">
    <property type="term" value="C:cytosol"/>
    <property type="evidence" value="ECO:0007669"/>
    <property type="project" value="TreeGrafter"/>
</dbReference>
<dbReference type="GO" id="GO:0008661">
    <property type="term" value="F:1-deoxy-D-xylulose-5-phosphate synthase activity"/>
    <property type="evidence" value="ECO:0007669"/>
    <property type="project" value="UniProtKB-UniRule"/>
</dbReference>
<dbReference type="GO" id="GO:0000287">
    <property type="term" value="F:magnesium ion binding"/>
    <property type="evidence" value="ECO:0007669"/>
    <property type="project" value="UniProtKB-UniRule"/>
</dbReference>
<dbReference type="GO" id="GO:0030976">
    <property type="term" value="F:thiamine pyrophosphate binding"/>
    <property type="evidence" value="ECO:0007669"/>
    <property type="project" value="UniProtKB-UniRule"/>
</dbReference>
<dbReference type="GO" id="GO:0052865">
    <property type="term" value="P:1-deoxy-D-xylulose 5-phosphate biosynthetic process"/>
    <property type="evidence" value="ECO:0007669"/>
    <property type="project" value="UniProtKB-UniPathway"/>
</dbReference>
<dbReference type="GO" id="GO:0019288">
    <property type="term" value="P:isopentenyl diphosphate biosynthetic process, methylerythritol 4-phosphate pathway"/>
    <property type="evidence" value="ECO:0007669"/>
    <property type="project" value="TreeGrafter"/>
</dbReference>
<dbReference type="GO" id="GO:0016114">
    <property type="term" value="P:terpenoid biosynthetic process"/>
    <property type="evidence" value="ECO:0007669"/>
    <property type="project" value="UniProtKB-UniRule"/>
</dbReference>
<dbReference type="GO" id="GO:0009228">
    <property type="term" value="P:thiamine biosynthetic process"/>
    <property type="evidence" value="ECO:0007669"/>
    <property type="project" value="UniProtKB-UniRule"/>
</dbReference>
<dbReference type="CDD" id="cd02007">
    <property type="entry name" value="TPP_DXS"/>
    <property type="match status" value="1"/>
</dbReference>
<dbReference type="CDD" id="cd07033">
    <property type="entry name" value="TPP_PYR_DXS_TK_like"/>
    <property type="match status" value="1"/>
</dbReference>
<dbReference type="FunFam" id="3.40.50.970:FF:000005">
    <property type="entry name" value="1-deoxy-D-xylulose-5-phosphate synthase"/>
    <property type="match status" value="1"/>
</dbReference>
<dbReference type="Gene3D" id="3.40.50.920">
    <property type="match status" value="1"/>
</dbReference>
<dbReference type="Gene3D" id="3.40.50.970">
    <property type="match status" value="2"/>
</dbReference>
<dbReference type="HAMAP" id="MF_00315">
    <property type="entry name" value="DXP_synth"/>
    <property type="match status" value="1"/>
</dbReference>
<dbReference type="InterPro" id="IPR005477">
    <property type="entry name" value="Dxylulose-5-P_synthase"/>
</dbReference>
<dbReference type="InterPro" id="IPR029061">
    <property type="entry name" value="THDP-binding"/>
</dbReference>
<dbReference type="InterPro" id="IPR009014">
    <property type="entry name" value="Transketo_C/PFOR_II"/>
</dbReference>
<dbReference type="InterPro" id="IPR005475">
    <property type="entry name" value="Transketolase-like_Pyr-bd"/>
</dbReference>
<dbReference type="InterPro" id="IPR020826">
    <property type="entry name" value="Transketolase_BS"/>
</dbReference>
<dbReference type="InterPro" id="IPR033248">
    <property type="entry name" value="Transketolase_C"/>
</dbReference>
<dbReference type="InterPro" id="IPR049557">
    <property type="entry name" value="Transketolase_CS"/>
</dbReference>
<dbReference type="NCBIfam" id="TIGR00204">
    <property type="entry name" value="dxs"/>
    <property type="match status" value="1"/>
</dbReference>
<dbReference type="NCBIfam" id="NF003933">
    <property type="entry name" value="PRK05444.2-2"/>
    <property type="match status" value="1"/>
</dbReference>
<dbReference type="PANTHER" id="PTHR43322">
    <property type="entry name" value="1-D-DEOXYXYLULOSE 5-PHOSPHATE SYNTHASE-RELATED"/>
    <property type="match status" value="1"/>
</dbReference>
<dbReference type="PANTHER" id="PTHR43322:SF5">
    <property type="entry name" value="1-DEOXY-D-XYLULOSE-5-PHOSPHATE SYNTHASE, CHLOROPLASTIC"/>
    <property type="match status" value="1"/>
</dbReference>
<dbReference type="Pfam" id="PF13292">
    <property type="entry name" value="DXP_synthase_N"/>
    <property type="match status" value="1"/>
</dbReference>
<dbReference type="Pfam" id="PF02779">
    <property type="entry name" value="Transket_pyr"/>
    <property type="match status" value="1"/>
</dbReference>
<dbReference type="Pfam" id="PF02780">
    <property type="entry name" value="Transketolase_C"/>
    <property type="match status" value="1"/>
</dbReference>
<dbReference type="SMART" id="SM00861">
    <property type="entry name" value="Transket_pyr"/>
    <property type="match status" value="1"/>
</dbReference>
<dbReference type="SUPFAM" id="SSF52518">
    <property type="entry name" value="Thiamin diphosphate-binding fold (THDP-binding)"/>
    <property type="match status" value="2"/>
</dbReference>
<dbReference type="SUPFAM" id="SSF52922">
    <property type="entry name" value="TK C-terminal domain-like"/>
    <property type="match status" value="1"/>
</dbReference>
<dbReference type="PROSITE" id="PS00801">
    <property type="entry name" value="TRANSKETOLASE_1"/>
    <property type="match status" value="1"/>
</dbReference>
<dbReference type="PROSITE" id="PS00802">
    <property type="entry name" value="TRANSKETOLASE_2"/>
    <property type="match status" value="1"/>
</dbReference>
<evidence type="ECO:0000255" key="1">
    <source>
        <dbReference type="HAMAP-Rule" id="MF_00315"/>
    </source>
</evidence>
<name>DXS_CORDI</name>
<accession>Q6NGV3</accession>
<organism>
    <name type="scientific">Corynebacterium diphtheriae (strain ATCC 700971 / NCTC 13129 / Biotype gravis)</name>
    <dbReference type="NCBI Taxonomy" id="257309"/>
    <lineage>
        <taxon>Bacteria</taxon>
        <taxon>Bacillati</taxon>
        <taxon>Actinomycetota</taxon>
        <taxon>Actinomycetes</taxon>
        <taxon>Mycobacteriales</taxon>
        <taxon>Corynebacteriaceae</taxon>
        <taxon>Corynebacterium</taxon>
    </lineage>
</organism>
<protein>
    <recommendedName>
        <fullName evidence="1">1-deoxy-D-xylulose-5-phosphate synthase</fullName>
        <ecNumber evidence="1">2.2.1.7</ecNumber>
    </recommendedName>
    <alternativeName>
        <fullName evidence="1">1-deoxyxylulose-5-phosphate synthase</fullName>
        <shortName evidence="1">DXP synthase</shortName>
        <shortName evidence="1">DXPS</shortName>
    </alternativeName>
</protein>
<keyword id="KW-0414">Isoprene biosynthesis</keyword>
<keyword id="KW-0460">Magnesium</keyword>
<keyword id="KW-0479">Metal-binding</keyword>
<keyword id="KW-1185">Reference proteome</keyword>
<keyword id="KW-0784">Thiamine biosynthesis</keyword>
<keyword id="KW-0786">Thiamine pyrophosphate</keyword>
<keyword id="KW-0808">Transferase</keyword>
<sequence length="635" mass="67667">MSILEHISSPADVKTLSYEQLDTLASEIREFLVEKVSATGGHLGPNLGVVELTLAIHRVFSSPSDPIIFDTSHQSYVHKILTGRAGAFDTLRQKDGLSGYTSRAESNHDWTESSHASASLSYADGLAKAFQLKGEKARNVVAVVGDGALTGGMCWEALNNIATGTERNVVVVVNDNGRSYSPTIGGFADNLAALRMKPSYDRVMEQGKTTLKSLGWVGERTFEALHAFKEGVKSSVIPTEMFPELGMKYIGPVNGHNTKAVEAALRYGRDHKGPLIVHVVTEKGKGYAPAENDVAELMHSTGVINPKTGEPVGTKSPGWTSVFSKELVKAGETRKDIVAITAAMAGPTGLSAFGEKFPDRLFDVGIAEQHAMTSAAGLALGGLHPVVAIYSTFLNRAFDQLLMDVGLLNLPVTIVLDRAGVTGSDGASHNGVWDFAVAGIVPGIRIAAPRDDENLKELFAEALTIDSPTVVRFPKGELPSRLSAQQRFDDGAELLHYSDSDHEDSTPSILVVAVGSLVSSVMEIVSDIEECGCNVTVVDPRWAVPVAPSIVGLAADHELVITVEDGIIHGGVGAMINEALNASEIDVPVRNLAFPEVFPEHQSRNQLLDAVGLSPRGIKTQIIAAAESLYLLDKE</sequence>
<feature type="chain" id="PRO_0000256404" description="1-deoxy-D-xylulose-5-phosphate synthase">
    <location>
        <begin position="1"/>
        <end position="635"/>
    </location>
</feature>
<feature type="binding site" evidence="1">
    <location>
        <position position="73"/>
    </location>
    <ligand>
        <name>thiamine diphosphate</name>
        <dbReference type="ChEBI" id="CHEBI:58937"/>
    </ligand>
</feature>
<feature type="binding site" evidence="1">
    <location>
        <begin position="114"/>
        <end position="116"/>
    </location>
    <ligand>
        <name>thiamine diphosphate</name>
        <dbReference type="ChEBI" id="CHEBI:58937"/>
    </ligand>
</feature>
<feature type="binding site" evidence="1">
    <location>
        <position position="146"/>
    </location>
    <ligand>
        <name>Mg(2+)</name>
        <dbReference type="ChEBI" id="CHEBI:18420"/>
    </ligand>
</feature>
<feature type="binding site" evidence="1">
    <location>
        <begin position="147"/>
        <end position="148"/>
    </location>
    <ligand>
        <name>thiamine diphosphate</name>
        <dbReference type="ChEBI" id="CHEBI:58937"/>
    </ligand>
</feature>
<feature type="binding site" evidence="1">
    <location>
        <position position="176"/>
    </location>
    <ligand>
        <name>Mg(2+)</name>
        <dbReference type="ChEBI" id="CHEBI:18420"/>
    </ligand>
</feature>
<feature type="binding site" evidence="1">
    <location>
        <position position="176"/>
    </location>
    <ligand>
        <name>thiamine diphosphate</name>
        <dbReference type="ChEBI" id="CHEBI:58937"/>
    </ligand>
</feature>
<feature type="binding site" evidence="1">
    <location>
        <position position="287"/>
    </location>
    <ligand>
        <name>thiamine diphosphate</name>
        <dbReference type="ChEBI" id="CHEBI:58937"/>
    </ligand>
</feature>
<feature type="binding site" evidence="1">
    <location>
        <position position="368"/>
    </location>
    <ligand>
        <name>thiamine diphosphate</name>
        <dbReference type="ChEBI" id="CHEBI:58937"/>
    </ligand>
</feature>
<comment type="function">
    <text evidence="1">Catalyzes the acyloin condensation reaction between C atoms 2 and 3 of pyruvate and glyceraldehyde 3-phosphate to yield 1-deoxy-D-xylulose-5-phosphate (DXP).</text>
</comment>
<comment type="catalytic activity">
    <reaction evidence="1">
        <text>D-glyceraldehyde 3-phosphate + pyruvate + H(+) = 1-deoxy-D-xylulose 5-phosphate + CO2</text>
        <dbReference type="Rhea" id="RHEA:12605"/>
        <dbReference type="ChEBI" id="CHEBI:15361"/>
        <dbReference type="ChEBI" id="CHEBI:15378"/>
        <dbReference type="ChEBI" id="CHEBI:16526"/>
        <dbReference type="ChEBI" id="CHEBI:57792"/>
        <dbReference type="ChEBI" id="CHEBI:59776"/>
        <dbReference type="EC" id="2.2.1.7"/>
    </reaction>
</comment>
<comment type="cofactor">
    <cofactor evidence="1">
        <name>Mg(2+)</name>
        <dbReference type="ChEBI" id="CHEBI:18420"/>
    </cofactor>
    <text evidence="1">Binds 1 Mg(2+) ion per subunit.</text>
</comment>
<comment type="cofactor">
    <cofactor evidence="1">
        <name>thiamine diphosphate</name>
        <dbReference type="ChEBI" id="CHEBI:58937"/>
    </cofactor>
    <text evidence="1">Binds 1 thiamine pyrophosphate per subunit.</text>
</comment>
<comment type="pathway">
    <text evidence="1">Metabolic intermediate biosynthesis; 1-deoxy-D-xylulose 5-phosphate biosynthesis; 1-deoxy-D-xylulose 5-phosphate from D-glyceraldehyde 3-phosphate and pyruvate: step 1/1.</text>
</comment>
<comment type="subunit">
    <text evidence="1">Homodimer.</text>
</comment>
<comment type="similarity">
    <text evidence="1">Belongs to the transketolase family. DXPS subfamily.</text>
</comment>